<name>ACP_SALEP</name>
<proteinExistence type="inferred from homology"/>
<evidence type="ECO:0000255" key="1">
    <source>
        <dbReference type="HAMAP-Rule" id="MF_01217"/>
    </source>
</evidence>
<evidence type="ECO:0000255" key="2">
    <source>
        <dbReference type="PROSITE-ProRule" id="PRU00258"/>
    </source>
</evidence>
<gene>
    <name evidence="1" type="primary">acpP</name>
    <name type="ordered locus">SEN1853</name>
</gene>
<protein>
    <recommendedName>
        <fullName evidence="1">Acyl carrier protein</fullName>
        <shortName evidence="1">ACP</shortName>
    </recommendedName>
</protein>
<accession>B5QXE0</accession>
<dbReference type="EMBL" id="AM933172">
    <property type="protein sequence ID" value="CAR33433.1"/>
    <property type="molecule type" value="Genomic_DNA"/>
</dbReference>
<dbReference type="RefSeq" id="WP_000103754.1">
    <property type="nucleotide sequence ID" value="NC_011294.1"/>
</dbReference>
<dbReference type="SMR" id="B5QXE0"/>
<dbReference type="GeneID" id="98387866"/>
<dbReference type="KEGG" id="set:SEN1853"/>
<dbReference type="HOGENOM" id="CLU_108696_5_1_6"/>
<dbReference type="UniPathway" id="UPA00094"/>
<dbReference type="Proteomes" id="UP000000613">
    <property type="component" value="Chromosome"/>
</dbReference>
<dbReference type="GO" id="GO:0005829">
    <property type="term" value="C:cytosol"/>
    <property type="evidence" value="ECO:0007669"/>
    <property type="project" value="TreeGrafter"/>
</dbReference>
<dbReference type="GO" id="GO:0016020">
    <property type="term" value="C:membrane"/>
    <property type="evidence" value="ECO:0007669"/>
    <property type="project" value="GOC"/>
</dbReference>
<dbReference type="GO" id="GO:0000035">
    <property type="term" value="F:acyl binding"/>
    <property type="evidence" value="ECO:0007669"/>
    <property type="project" value="TreeGrafter"/>
</dbReference>
<dbReference type="GO" id="GO:0000036">
    <property type="term" value="F:acyl carrier activity"/>
    <property type="evidence" value="ECO:0007669"/>
    <property type="project" value="UniProtKB-UniRule"/>
</dbReference>
<dbReference type="GO" id="GO:0009245">
    <property type="term" value="P:lipid A biosynthetic process"/>
    <property type="evidence" value="ECO:0007669"/>
    <property type="project" value="TreeGrafter"/>
</dbReference>
<dbReference type="FunFam" id="1.10.1200.10:FF:000001">
    <property type="entry name" value="Acyl carrier protein"/>
    <property type="match status" value="1"/>
</dbReference>
<dbReference type="Gene3D" id="1.10.1200.10">
    <property type="entry name" value="ACP-like"/>
    <property type="match status" value="1"/>
</dbReference>
<dbReference type="HAMAP" id="MF_01217">
    <property type="entry name" value="Acyl_carrier"/>
    <property type="match status" value="1"/>
</dbReference>
<dbReference type="InterPro" id="IPR003231">
    <property type="entry name" value="ACP"/>
</dbReference>
<dbReference type="InterPro" id="IPR036736">
    <property type="entry name" value="ACP-like_sf"/>
</dbReference>
<dbReference type="InterPro" id="IPR009081">
    <property type="entry name" value="PP-bd_ACP"/>
</dbReference>
<dbReference type="InterPro" id="IPR006162">
    <property type="entry name" value="Ppantetheine_attach_site"/>
</dbReference>
<dbReference type="NCBIfam" id="TIGR00517">
    <property type="entry name" value="acyl_carrier"/>
    <property type="match status" value="1"/>
</dbReference>
<dbReference type="NCBIfam" id="NF002148">
    <property type="entry name" value="PRK00982.1-2"/>
    <property type="match status" value="1"/>
</dbReference>
<dbReference type="NCBIfam" id="NF002149">
    <property type="entry name" value="PRK00982.1-3"/>
    <property type="match status" value="1"/>
</dbReference>
<dbReference type="NCBIfam" id="NF002150">
    <property type="entry name" value="PRK00982.1-4"/>
    <property type="match status" value="1"/>
</dbReference>
<dbReference type="NCBIfam" id="NF002151">
    <property type="entry name" value="PRK00982.1-5"/>
    <property type="match status" value="1"/>
</dbReference>
<dbReference type="PANTHER" id="PTHR20863">
    <property type="entry name" value="ACYL CARRIER PROTEIN"/>
    <property type="match status" value="1"/>
</dbReference>
<dbReference type="PANTHER" id="PTHR20863:SF76">
    <property type="entry name" value="CARRIER DOMAIN-CONTAINING PROTEIN"/>
    <property type="match status" value="1"/>
</dbReference>
<dbReference type="Pfam" id="PF00550">
    <property type="entry name" value="PP-binding"/>
    <property type="match status" value="1"/>
</dbReference>
<dbReference type="SUPFAM" id="SSF47336">
    <property type="entry name" value="ACP-like"/>
    <property type="match status" value="1"/>
</dbReference>
<dbReference type="PROSITE" id="PS50075">
    <property type="entry name" value="CARRIER"/>
    <property type="match status" value="1"/>
</dbReference>
<dbReference type="PROSITE" id="PS00012">
    <property type="entry name" value="PHOSPHOPANTETHEINE"/>
    <property type="match status" value="1"/>
</dbReference>
<comment type="function">
    <text evidence="1">Carrier of the growing fatty acid chain in fatty acid biosynthesis.</text>
</comment>
<comment type="pathway">
    <text evidence="1">Lipid metabolism; fatty acid biosynthesis.</text>
</comment>
<comment type="subcellular location">
    <subcellularLocation>
        <location evidence="1">Cytoplasm</location>
    </subcellularLocation>
</comment>
<comment type="PTM">
    <text evidence="1">4'-phosphopantetheine is transferred from CoA to a specific serine of apo-ACP by AcpS. This modification is essential for activity because fatty acids are bound in thioester linkage to the sulfhydryl of the prosthetic group.</text>
</comment>
<comment type="similarity">
    <text evidence="1">Belongs to the acyl carrier protein (ACP) family.</text>
</comment>
<reference key="1">
    <citation type="journal article" date="2008" name="Genome Res.">
        <title>Comparative genome analysis of Salmonella enteritidis PT4 and Salmonella gallinarum 287/91 provides insights into evolutionary and host adaptation pathways.</title>
        <authorList>
            <person name="Thomson N.R."/>
            <person name="Clayton D.J."/>
            <person name="Windhorst D."/>
            <person name="Vernikos G."/>
            <person name="Davidson S."/>
            <person name="Churcher C."/>
            <person name="Quail M.A."/>
            <person name="Stevens M."/>
            <person name="Jones M.A."/>
            <person name="Watson M."/>
            <person name="Barron A."/>
            <person name="Layton A."/>
            <person name="Pickard D."/>
            <person name="Kingsley R.A."/>
            <person name="Bignell A."/>
            <person name="Clark L."/>
            <person name="Harris B."/>
            <person name="Ormond D."/>
            <person name="Abdellah Z."/>
            <person name="Brooks K."/>
            <person name="Cherevach I."/>
            <person name="Chillingworth T."/>
            <person name="Woodward J."/>
            <person name="Norberczak H."/>
            <person name="Lord A."/>
            <person name="Arrowsmith C."/>
            <person name="Jagels K."/>
            <person name="Moule S."/>
            <person name="Mungall K."/>
            <person name="Saunders M."/>
            <person name="Whitehead S."/>
            <person name="Chabalgoity J.A."/>
            <person name="Maskell D."/>
            <person name="Humphreys T."/>
            <person name="Roberts M."/>
            <person name="Barrow P.A."/>
            <person name="Dougan G."/>
            <person name="Parkhill J."/>
        </authorList>
    </citation>
    <scope>NUCLEOTIDE SEQUENCE [LARGE SCALE GENOMIC DNA]</scope>
    <source>
        <strain>P125109</strain>
    </source>
</reference>
<feature type="chain" id="PRO_1000139062" description="Acyl carrier protein">
    <location>
        <begin position="1"/>
        <end position="78"/>
    </location>
</feature>
<feature type="domain" description="Carrier" evidence="2">
    <location>
        <begin position="2"/>
        <end position="77"/>
    </location>
</feature>
<feature type="modified residue" description="O-(pantetheine 4'-phosphoryl)serine" evidence="2">
    <location>
        <position position="37"/>
    </location>
</feature>
<organism>
    <name type="scientific">Salmonella enteritidis PT4 (strain P125109)</name>
    <dbReference type="NCBI Taxonomy" id="550537"/>
    <lineage>
        <taxon>Bacteria</taxon>
        <taxon>Pseudomonadati</taxon>
        <taxon>Pseudomonadota</taxon>
        <taxon>Gammaproteobacteria</taxon>
        <taxon>Enterobacterales</taxon>
        <taxon>Enterobacteriaceae</taxon>
        <taxon>Salmonella</taxon>
    </lineage>
</organism>
<sequence length="78" mass="8640">MSTIEERVKKIIGEQLGVKQEEVTNNASFVEDLGADSLDTVELVMALEEEFDTEIPDEEAEKITTVQAAIDYINGHQA</sequence>
<keyword id="KW-0963">Cytoplasm</keyword>
<keyword id="KW-0275">Fatty acid biosynthesis</keyword>
<keyword id="KW-0276">Fatty acid metabolism</keyword>
<keyword id="KW-0444">Lipid biosynthesis</keyword>
<keyword id="KW-0443">Lipid metabolism</keyword>
<keyword id="KW-0596">Phosphopantetheine</keyword>
<keyword id="KW-0597">Phosphoprotein</keyword>